<dbReference type="EMBL" id="CP001078">
    <property type="protein sequence ID" value="ACD51949.1"/>
    <property type="molecule type" value="Genomic_DNA"/>
</dbReference>
<dbReference type="SMR" id="B2V4A6"/>
<dbReference type="KEGG" id="cbt:CLH_1161"/>
<dbReference type="HOGENOM" id="CLU_165326_0_0_9"/>
<dbReference type="HAMAP" id="MF_01503">
    <property type="entry name" value="RemA"/>
    <property type="match status" value="1"/>
</dbReference>
<dbReference type="InterPro" id="IPR007169">
    <property type="entry name" value="RemA-like"/>
</dbReference>
<dbReference type="NCBIfam" id="NF046064">
    <property type="entry name" value="MtxBflmRegRemA"/>
    <property type="match status" value="1"/>
</dbReference>
<dbReference type="NCBIfam" id="NF003315">
    <property type="entry name" value="PRK04323.1"/>
    <property type="match status" value="1"/>
</dbReference>
<dbReference type="PANTHER" id="PTHR38449:SF1">
    <property type="entry name" value="REGULATORY PROTEIN SSL2874-RELATED"/>
    <property type="match status" value="1"/>
</dbReference>
<dbReference type="PANTHER" id="PTHR38449">
    <property type="entry name" value="REGULATORY PROTEIN TM_1690-RELATED"/>
    <property type="match status" value="1"/>
</dbReference>
<dbReference type="Pfam" id="PF04025">
    <property type="entry name" value="RemA-like"/>
    <property type="match status" value="1"/>
</dbReference>
<protein>
    <recommendedName>
        <fullName evidence="1">Putative regulatory protein CLH_1161</fullName>
    </recommendedName>
</protein>
<name>Y1161_CLOBA</name>
<proteinExistence type="inferred from homology"/>
<organism>
    <name type="scientific">Clostridium botulinum (strain Alaska E43 / Type E3)</name>
    <dbReference type="NCBI Taxonomy" id="508767"/>
    <lineage>
        <taxon>Bacteria</taxon>
        <taxon>Bacillati</taxon>
        <taxon>Bacillota</taxon>
        <taxon>Clostridia</taxon>
        <taxon>Eubacteriales</taxon>
        <taxon>Clostridiaceae</taxon>
        <taxon>Clostridium</taxon>
    </lineage>
</organism>
<accession>B2V4A6</accession>
<reference key="1">
    <citation type="submission" date="2008-05" db="EMBL/GenBank/DDBJ databases">
        <title>Complete genome sequence of Clostridium botulinum E3 str. Alaska E43.</title>
        <authorList>
            <person name="Brinkac L.M."/>
            <person name="Brown J.L."/>
            <person name="Bruce D."/>
            <person name="Detter C."/>
            <person name="Munk C."/>
            <person name="Smith L.A."/>
            <person name="Smith T.J."/>
            <person name="Sutton G."/>
            <person name="Brettin T.S."/>
        </authorList>
    </citation>
    <scope>NUCLEOTIDE SEQUENCE [LARGE SCALE GENOMIC DNA]</scope>
    <source>
        <strain>Alaska E43 / Type E3</strain>
    </source>
</reference>
<sequence>MGIKLINIGFGNIVSANRLVAIVSPESAPIKRIIQEARDRGMLIDATYGRRTRAVIITDSDHVILSAVQPETVAHRLSTKEEVVDEVDE</sequence>
<feature type="chain" id="PRO_1000198215" description="Putative regulatory protein CLH_1161">
    <location>
        <begin position="1"/>
        <end position="89"/>
    </location>
</feature>
<gene>
    <name type="ordered locus">CLH_1161</name>
</gene>
<comment type="similarity">
    <text evidence="1">Belongs to the RemA family.</text>
</comment>
<evidence type="ECO:0000255" key="1">
    <source>
        <dbReference type="HAMAP-Rule" id="MF_01503"/>
    </source>
</evidence>